<organism>
    <name type="scientific">Homo sapiens</name>
    <name type="common">Human</name>
    <dbReference type="NCBI Taxonomy" id="9606"/>
    <lineage>
        <taxon>Eukaryota</taxon>
        <taxon>Metazoa</taxon>
        <taxon>Chordata</taxon>
        <taxon>Craniata</taxon>
        <taxon>Vertebrata</taxon>
        <taxon>Euteleostomi</taxon>
        <taxon>Mammalia</taxon>
        <taxon>Eutheria</taxon>
        <taxon>Euarchontoglires</taxon>
        <taxon>Primates</taxon>
        <taxon>Haplorrhini</taxon>
        <taxon>Catarrhini</taxon>
        <taxon>Hominidae</taxon>
        <taxon>Homo</taxon>
    </lineage>
</organism>
<proteinExistence type="evidence at protein level"/>
<keyword id="KW-0002">3D-structure</keyword>
<keyword id="KW-0025">Alternative splicing</keyword>
<keyword id="KW-0963">Cytoplasm</keyword>
<keyword id="KW-0225">Disease variant</keyword>
<keyword id="KW-1063">Hypotrichosis</keyword>
<keyword id="KW-0597">Phosphoprotein</keyword>
<keyword id="KW-1267">Proteomics identification</keyword>
<keyword id="KW-1185">Reference proteome</keyword>
<keyword id="KW-0728">SH3 domain</keyword>
<evidence type="ECO:0000255" key="1"/>
<evidence type="ECO:0000255" key="2">
    <source>
        <dbReference type="PROSITE-ProRule" id="PRU00192"/>
    </source>
</evidence>
<evidence type="ECO:0000256" key="3">
    <source>
        <dbReference type="SAM" id="MobiDB-lite"/>
    </source>
</evidence>
<evidence type="ECO:0000269" key="4">
    <source>
    </source>
</evidence>
<evidence type="ECO:0000269" key="5">
    <source>
    </source>
</evidence>
<evidence type="ECO:0000269" key="6">
    <source>
    </source>
</evidence>
<evidence type="ECO:0000269" key="7">
    <source>
    </source>
</evidence>
<evidence type="ECO:0000269" key="8">
    <source>
    </source>
</evidence>
<evidence type="ECO:0000269" key="9">
    <source>
    </source>
</evidence>
<evidence type="ECO:0000303" key="10">
    <source>
    </source>
</evidence>
<evidence type="ECO:0000303" key="11">
    <source>
    </source>
</evidence>
<evidence type="ECO:0000305" key="12"/>
<evidence type="ECO:0007744" key="13">
    <source>
    </source>
</evidence>
<evidence type="ECO:0007829" key="14">
    <source>
        <dbReference type="PDB" id="1WXT"/>
    </source>
</evidence>
<accession>Q8TE67</accession>
<accession>A8K833</accession>
<accession>Q5T8Q6</accession>
<accession>Q5T8Q7</accession>
<accession>Q5T8Q8</accession>
<accession>Q96E47</accession>
<accession>Q9H719</accession>
<feature type="chain" id="PRO_0000239087" description="Epidermal growth factor receptor kinase substrate 8-like protein 3">
    <location>
        <begin position="1"/>
        <end position="593"/>
    </location>
</feature>
<feature type="domain" description="PTB" evidence="1">
    <location>
        <begin position="28"/>
        <end position="155"/>
    </location>
</feature>
<feature type="domain" description="SH3" evidence="2">
    <location>
        <begin position="450"/>
        <end position="509"/>
    </location>
</feature>
<feature type="region of interest" description="Disordered" evidence="3">
    <location>
        <begin position="149"/>
        <end position="171"/>
    </location>
</feature>
<feature type="region of interest" description="Disordered" evidence="3">
    <location>
        <begin position="184"/>
        <end position="239"/>
    </location>
</feature>
<feature type="region of interest" description="Disordered" evidence="3">
    <location>
        <begin position="374"/>
        <end position="451"/>
    </location>
</feature>
<feature type="compositionally biased region" description="Polar residues" evidence="3">
    <location>
        <begin position="386"/>
        <end position="401"/>
    </location>
</feature>
<feature type="compositionally biased region" description="Basic and acidic residues" evidence="3">
    <location>
        <begin position="425"/>
        <end position="435"/>
    </location>
</feature>
<feature type="modified residue" description="Phosphoserine" evidence="13">
    <location>
        <position position="231"/>
    </location>
</feature>
<feature type="splice variant" id="VSP_019095" description="In isoform 3." evidence="11">
    <original>Q</original>
    <variation>QS</variation>
    <location>
        <position position="153"/>
    </location>
</feature>
<feature type="splice variant" id="VSP_019096" description="In isoform 2." evidence="10">
    <location>
        <begin position="412"/>
        <end position="441"/>
    </location>
</feature>
<feature type="sequence variant" id="VAR_083829" description="In HYPT5; uncertain significance; dbSNP:rs1650987435." evidence="9">
    <original>A</original>
    <variation>T</variation>
    <location>
        <position position="8"/>
    </location>
</feature>
<feature type="sequence variant" id="VAR_050976" description="In dbSNP:rs17598321.">
    <original>M</original>
    <variation>I</variation>
    <location>
        <position position="35"/>
    </location>
</feature>
<feature type="sequence variant" id="VAR_026580" description="In dbSNP:rs6693815." evidence="4">
    <original>G</original>
    <variation>S</variation>
    <location>
        <position position="163"/>
    </location>
</feature>
<feature type="sequence variant" id="VAR_026581" description="In dbSNP:rs3818562." evidence="6 7">
    <original>H</original>
    <variation>Y</variation>
    <location>
        <position position="293"/>
    </location>
</feature>
<feature type="sequence variant" id="VAR_026582" description="In dbSNP:rs11102001.">
    <original>P</original>
    <variation>S</variation>
    <location>
        <position position="356"/>
    </location>
</feature>
<feature type="sequence variant" id="VAR_050977" description="In dbSNP:rs35072794.">
    <original>R</original>
    <variation>Q</variation>
    <location>
        <position position="581"/>
    </location>
</feature>
<feature type="strand" evidence="14">
    <location>
        <begin position="453"/>
        <end position="459"/>
    </location>
</feature>
<feature type="strand" evidence="14">
    <location>
        <begin position="465"/>
        <end position="468"/>
    </location>
</feature>
<feature type="strand" evidence="14">
    <location>
        <begin position="476"/>
        <end position="481"/>
    </location>
</feature>
<feature type="strand" evidence="14">
    <location>
        <begin position="483"/>
        <end position="490"/>
    </location>
</feature>
<feature type="strand" evidence="14">
    <location>
        <begin position="496"/>
        <end position="500"/>
    </location>
</feature>
<feature type="helix" evidence="14">
    <location>
        <begin position="501"/>
        <end position="503"/>
    </location>
</feature>
<gene>
    <name type="primary">EPS8L3</name>
    <name type="synonym">EPS8R3</name>
</gene>
<comment type="subunit">
    <text evidence="5 8">Interacts with ABI1. Part of a complex that contains SOS1, ABI1 and EPS8L2. Interacts with FASLG.</text>
</comment>
<comment type="subcellular location">
    <subcellularLocation>
        <location evidence="5">Cytoplasm</location>
    </subcellularLocation>
</comment>
<comment type="alternative products">
    <event type="alternative splicing"/>
    <isoform>
        <id>Q8TE67-1</id>
        <name>1</name>
        <sequence type="displayed"/>
    </isoform>
    <isoform>
        <id>Q8TE67-2</id>
        <name>2</name>
        <sequence type="described" ref="VSP_019096"/>
    </isoform>
    <isoform>
        <id>Q8TE67-3</id>
        <name>3</name>
        <name>A</name>
        <sequence type="described" ref="VSP_019095"/>
    </isoform>
</comment>
<comment type="disease" evidence="9">
    <disease id="DI-05779">
        <name>Hypotrichosis 5</name>
        <acronym>HYPT5</acronym>
        <description>A form of hypotrichosis, a condition characterized by the presence of less than the normal amount of hair and abnormal hair follicles and shafts, which are thin and atrophic. The extent of scalp and body hair involvement can be very variable, within as well as between families. HYPT5 is an autosomal dominant form characterized by little or no scalp hair at birth, wiry and irregular scalp hair in childhood, and sparse or no forehead and parietal hair at puberty. Eyebrows and eyelashes are thin, and pubic and axillary hair fails to develop. Scarring alopecia is modest, and vertex hair is normal.</description>
        <dbReference type="MIM" id="612841"/>
    </disease>
    <text>The disease may be caused by variants affecting the gene represented in this entry.</text>
</comment>
<comment type="similarity">
    <text evidence="12">Belongs to the EPS8 family.</text>
</comment>
<protein>
    <recommendedName>
        <fullName>Epidermal growth factor receptor kinase substrate 8-like protein 3</fullName>
        <shortName>EPS8-like protein 3</shortName>
    </recommendedName>
    <alternativeName>
        <fullName>Epidermal growth factor receptor pathway substrate 8-related protein 3</fullName>
        <shortName>EPS8-related protein 3</shortName>
    </alternativeName>
</protein>
<reference key="1">
    <citation type="journal article" date="2003" name="Genomics">
        <title>In silico analysis of the EPS8 gene family: genomic organization, expression profile, and protein structure.</title>
        <authorList>
            <person name="Tocchetti A."/>
            <person name="Confalonieri S."/>
            <person name="Scita G."/>
            <person name="Di Fiore P.P."/>
            <person name="Betsholtz C."/>
        </authorList>
    </citation>
    <scope>NUCLEOTIDE SEQUENCE [MRNA] (ISOFORM 1)</scope>
    <scope>VARIANT SER-163</scope>
</reference>
<reference key="2">
    <citation type="journal article" date="2004" name="Nat. Genet.">
        <title>Complete sequencing and characterization of 21,243 full-length human cDNAs.</title>
        <authorList>
            <person name="Ota T."/>
            <person name="Suzuki Y."/>
            <person name="Nishikawa T."/>
            <person name="Otsuki T."/>
            <person name="Sugiyama T."/>
            <person name="Irie R."/>
            <person name="Wakamatsu A."/>
            <person name="Hayashi K."/>
            <person name="Sato H."/>
            <person name="Nagai K."/>
            <person name="Kimura K."/>
            <person name="Makita H."/>
            <person name="Sekine M."/>
            <person name="Obayashi M."/>
            <person name="Nishi T."/>
            <person name="Shibahara T."/>
            <person name="Tanaka T."/>
            <person name="Ishii S."/>
            <person name="Yamamoto J."/>
            <person name="Saito K."/>
            <person name="Kawai Y."/>
            <person name="Isono Y."/>
            <person name="Nakamura Y."/>
            <person name="Nagahari K."/>
            <person name="Murakami K."/>
            <person name="Yasuda T."/>
            <person name="Iwayanagi T."/>
            <person name="Wagatsuma M."/>
            <person name="Shiratori A."/>
            <person name="Sudo H."/>
            <person name="Hosoiri T."/>
            <person name="Kaku Y."/>
            <person name="Kodaira H."/>
            <person name="Kondo H."/>
            <person name="Sugawara M."/>
            <person name="Takahashi M."/>
            <person name="Kanda K."/>
            <person name="Yokoi T."/>
            <person name="Furuya T."/>
            <person name="Kikkawa E."/>
            <person name="Omura Y."/>
            <person name="Abe K."/>
            <person name="Kamihara K."/>
            <person name="Katsuta N."/>
            <person name="Sato K."/>
            <person name="Tanikawa M."/>
            <person name="Yamazaki M."/>
            <person name="Ninomiya K."/>
            <person name="Ishibashi T."/>
            <person name="Yamashita H."/>
            <person name="Murakawa K."/>
            <person name="Fujimori K."/>
            <person name="Tanai H."/>
            <person name="Kimata M."/>
            <person name="Watanabe M."/>
            <person name="Hiraoka S."/>
            <person name="Chiba Y."/>
            <person name="Ishida S."/>
            <person name="Ono Y."/>
            <person name="Takiguchi S."/>
            <person name="Watanabe S."/>
            <person name="Yosida M."/>
            <person name="Hotuta T."/>
            <person name="Kusano J."/>
            <person name="Kanehori K."/>
            <person name="Takahashi-Fujii A."/>
            <person name="Hara H."/>
            <person name="Tanase T.-O."/>
            <person name="Nomura Y."/>
            <person name="Togiya S."/>
            <person name="Komai F."/>
            <person name="Hara R."/>
            <person name="Takeuchi K."/>
            <person name="Arita M."/>
            <person name="Imose N."/>
            <person name="Musashino K."/>
            <person name="Yuuki H."/>
            <person name="Oshima A."/>
            <person name="Sasaki N."/>
            <person name="Aotsuka S."/>
            <person name="Yoshikawa Y."/>
            <person name="Matsunawa H."/>
            <person name="Ichihara T."/>
            <person name="Shiohata N."/>
            <person name="Sano S."/>
            <person name="Moriya S."/>
            <person name="Momiyama H."/>
            <person name="Satoh N."/>
            <person name="Takami S."/>
            <person name="Terashima Y."/>
            <person name="Suzuki O."/>
            <person name="Nakagawa S."/>
            <person name="Senoh A."/>
            <person name="Mizoguchi H."/>
            <person name="Goto Y."/>
            <person name="Shimizu F."/>
            <person name="Wakebe H."/>
            <person name="Hishigaki H."/>
            <person name="Watanabe T."/>
            <person name="Sugiyama A."/>
            <person name="Takemoto M."/>
            <person name="Kawakami B."/>
            <person name="Yamazaki M."/>
            <person name="Watanabe K."/>
            <person name="Kumagai A."/>
            <person name="Itakura S."/>
            <person name="Fukuzumi Y."/>
            <person name="Fujimori Y."/>
            <person name="Komiyama M."/>
            <person name="Tashiro H."/>
            <person name="Tanigami A."/>
            <person name="Fujiwara T."/>
            <person name="Ono T."/>
            <person name="Yamada K."/>
            <person name="Fujii Y."/>
            <person name="Ozaki K."/>
            <person name="Hirao M."/>
            <person name="Ohmori Y."/>
            <person name="Kawabata A."/>
            <person name="Hikiji T."/>
            <person name="Kobatake N."/>
            <person name="Inagaki H."/>
            <person name="Ikema Y."/>
            <person name="Okamoto S."/>
            <person name="Okitani R."/>
            <person name="Kawakami T."/>
            <person name="Noguchi S."/>
            <person name="Itoh T."/>
            <person name="Shigeta K."/>
            <person name="Senba T."/>
            <person name="Matsumura K."/>
            <person name="Nakajima Y."/>
            <person name="Mizuno T."/>
            <person name="Morinaga M."/>
            <person name="Sasaki M."/>
            <person name="Togashi T."/>
            <person name="Oyama M."/>
            <person name="Hata H."/>
            <person name="Watanabe M."/>
            <person name="Komatsu T."/>
            <person name="Mizushima-Sugano J."/>
            <person name="Satoh T."/>
            <person name="Shirai Y."/>
            <person name="Takahashi Y."/>
            <person name="Nakagawa K."/>
            <person name="Okumura K."/>
            <person name="Nagase T."/>
            <person name="Nomura N."/>
            <person name="Kikuchi H."/>
            <person name="Masuho Y."/>
            <person name="Yamashita R."/>
            <person name="Nakai K."/>
            <person name="Yada T."/>
            <person name="Nakamura Y."/>
            <person name="Ohara O."/>
            <person name="Isogai T."/>
            <person name="Sugano S."/>
        </authorList>
    </citation>
    <scope>NUCLEOTIDE SEQUENCE [LARGE SCALE MRNA] (ISOFORMS 1 AND 2)</scope>
    <scope>VARIANT TYR-293</scope>
    <source>
        <tissue>Colon</tissue>
    </source>
</reference>
<reference key="3">
    <citation type="journal article" date="2006" name="Nature">
        <title>The DNA sequence and biological annotation of human chromosome 1.</title>
        <authorList>
            <person name="Gregory S.G."/>
            <person name="Barlow K.F."/>
            <person name="McLay K.E."/>
            <person name="Kaul R."/>
            <person name="Swarbreck D."/>
            <person name="Dunham A."/>
            <person name="Scott C.E."/>
            <person name="Howe K.L."/>
            <person name="Woodfine K."/>
            <person name="Spencer C.C.A."/>
            <person name="Jones M.C."/>
            <person name="Gillson C."/>
            <person name="Searle S."/>
            <person name="Zhou Y."/>
            <person name="Kokocinski F."/>
            <person name="McDonald L."/>
            <person name="Evans R."/>
            <person name="Phillips K."/>
            <person name="Atkinson A."/>
            <person name="Cooper R."/>
            <person name="Jones C."/>
            <person name="Hall R.E."/>
            <person name="Andrews T.D."/>
            <person name="Lloyd C."/>
            <person name="Ainscough R."/>
            <person name="Almeida J.P."/>
            <person name="Ambrose K.D."/>
            <person name="Anderson F."/>
            <person name="Andrew R.W."/>
            <person name="Ashwell R.I.S."/>
            <person name="Aubin K."/>
            <person name="Babbage A.K."/>
            <person name="Bagguley C.L."/>
            <person name="Bailey J."/>
            <person name="Beasley H."/>
            <person name="Bethel G."/>
            <person name="Bird C.P."/>
            <person name="Bray-Allen S."/>
            <person name="Brown J.Y."/>
            <person name="Brown A.J."/>
            <person name="Buckley D."/>
            <person name="Burton J."/>
            <person name="Bye J."/>
            <person name="Carder C."/>
            <person name="Chapman J.C."/>
            <person name="Clark S.Y."/>
            <person name="Clarke G."/>
            <person name="Clee C."/>
            <person name="Cobley V."/>
            <person name="Collier R.E."/>
            <person name="Corby N."/>
            <person name="Coville G.J."/>
            <person name="Davies J."/>
            <person name="Deadman R."/>
            <person name="Dunn M."/>
            <person name="Earthrowl M."/>
            <person name="Ellington A.G."/>
            <person name="Errington H."/>
            <person name="Frankish A."/>
            <person name="Frankland J."/>
            <person name="French L."/>
            <person name="Garner P."/>
            <person name="Garnett J."/>
            <person name="Gay L."/>
            <person name="Ghori M.R.J."/>
            <person name="Gibson R."/>
            <person name="Gilby L.M."/>
            <person name="Gillett W."/>
            <person name="Glithero R.J."/>
            <person name="Grafham D.V."/>
            <person name="Griffiths C."/>
            <person name="Griffiths-Jones S."/>
            <person name="Grocock R."/>
            <person name="Hammond S."/>
            <person name="Harrison E.S.I."/>
            <person name="Hart E."/>
            <person name="Haugen E."/>
            <person name="Heath P.D."/>
            <person name="Holmes S."/>
            <person name="Holt K."/>
            <person name="Howden P.J."/>
            <person name="Hunt A.R."/>
            <person name="Hunt S.E."/>
            <person name="Hunter G."/>
            <person name="Isherwood J."/>
            <person name="James R."/>
            <person name="Johnson C."/>
            <person name="Johnson D."/>
            <person name="Joy A."/>
            <person name="Kay M."/>
            <person name="Kershaw J.K."/>
            <person name="Kibukawa M."/>
            <person name="Kimberley A.M."/>
            <person name="King A."/>
            <person name="Knights A.J."/>
            <person name="Lad H."/>
            <person name="Laird G."/>
            <person name="Lawlor S."/>
            <person name="Leongamornlert D.A."/>
            <person name="Lloyd D.M."/>
            <person name="Loveland J."/>
            <person name="Lovell J."/>
            <person name="Lush M.J."/>
            <person name="Lyne R."/>
            <person name="Martin S."/>
            <person name="Mashreghi-Mohammadi M."/>
            <person name="Matthews L."/>
            <person name="Matthews N.S.W."/>
            <person name="McLaren S."/>
            <person name="Milne S."/>
            <person name="Mistry S."/>
            <person name="Moore M.J.F."/>
            <person name="Nickerson T."/>
            <person name="O'Dell C.N."/>
            <person name="Oliver K."/>
            <person name="Palmeiri A."/>
            <person name="Palmer S.A."/>
            <person name="Parker A."/>
            <person name="Patel D."/>
            <person name="Pearce A.V."/>
            <person name="Peck A.I."/>
            <person name="Pelan S."/>
            <person name="Phelps K."/>
            <person name="Phillimore B.J."/>
            <person name="Plumb R."/>
            <person name="Rajan J."/>
            <person name="Raymond C."/>
            <person name="Rouse G."/>
            <person name="Saenphimmachak C."/>
            <person name="Sehra H.K."/>
            <person name="Sheridan E."/>
            <person name="Shownkeen R."/>
            <person name="Sims S."/>
            <person name="Skuce C.D."/>
            <person name="Smith M."/>
            <person name="Steward C."/>
            <person name="Subramanian S."/>
            <person name="Sycamore N."/>
            <person name="Tracey A."/>
            <person name="Tromans A."/>
            <person name="Van Helmond Z."/>
            <person name="Wall M."/>
            <person name="Wallis J.M."/>
            <person name="White S."/>
            <person name="Whitehead S.L."/>
            <person name="Wilkinson J.E."/>
            <person name="Willey D.L."/>
            <person name="Williams H."/>
            <person name="Wilming L."/>
            <person name="Wray P.W."/>
            <person name="Wu Z."/>
            <person name="Coulson A."/>
            <person name="Vaudin M."/>
            <person name="Sulston J.E."/>
            <person name="Durbin R.M."/>
            <person name="Hubbard T."/>
            <person name="Wooster R."/>
            <person name="Dunham I."/>
            <person name="Carter N.P."/>
            <person name="McVean G."/>
            <person name="Ross M.T."/>
            <person name="Harrow J."/>
            <person name="Olson M.V."/>
            <person name="Beck S."/>
            <person name="Rogers J."/>
            <person name="Bentley D.R."/>
        </authorList>
    </citation>
    <scope>NUCLEOTIDE SEQUENCE [LARGE SCALE GENOMIC DNA]</scope>
    <scope>ALTERNATIVE SPLICING</scope>
</reference>
<reference key="4">
    <citation type="journal article" date="2004" name="Genome Res.">
        <title>The status, quality, and expansion of the NIH full-length cDNA project: the Mammalian Gene Collection (MGC).</title>
        <authorList>
            <consortium name="The MGC Project Team"/>
        </authorList>
    </citation>
    <scope>NUCLEOTIDE SEQUENCE [LARGE SCALE MRNA] (ISOFORM 3)</scope>
    <scope>VARIANT TYR-293</scope>
    <source>
        <tissue>Colon</tissue>
    </source>
</reference>
<reference key="5">
    <citation type="journal article" date="2004" name="Mol. Biol. Cell">
        <title>The eps8 family of proteins links growth factor stimulation to actin reorganization generating functional redundancy in the Ras/Rac pathway.</title>
        <authorList>
            <person name="Offenhaeuser N."/>
            <person name="Borgonovo A."/>
            <person name="Disanza A."/>
            <person name="Romano P."/>
            <person name="Ponzanelli I."/>
            <person name="Iannolo G."/>
            <person name="Di Fiore P.P."/>
            <person name="Scita G."/>
        </authorList>
    </citation>
    <scope>IDENTIFICATION IN A COMPLEX WITH ABI1 AND SOS1</scope>
    <scope>INTERACTION WITH ABI1</scope>
    <scope>SUBCELLULAR LOCATION</scope>
    <scope>TISSUE SPECIFICITY</scope>
</reference>
<reference key="6">
    <citation type="journal article" date="2009" name="BMC Immunol.">
        <title>Identification of SH3 domain interaction partners of human FasL (CD178) by phage display screening.</title>
        <authorList>
            <person name="Voss M."/>
            <person name="Lettau M."/>
            <person name="Janssen O."/>
        </authorList>
    </citation>
    <scope>INTERACTION WITH FASLG</scope>
</reference>
<reference key="7">
    <citation type="journal article" date="2013" name="J. Proteome Res.">
        <title>Toward a comprehensive characterization of a human cancer cell phosphoproteome.</title>
        <authorList>
            <person name="Zhou H."/>
            <person name="Di Palma S."/>
            <person name="Preisinger C."/>
            <person name="Peng M."/>
            <person name="Polat A.N."/>
            <person name="Heck A.J."/>
            <person name="Mohammed S."/>
        </authorList>
    </citation>
    <scope>PHOSPHORYLATION [LARGE SCALE ANALYSIS] AT SER-231</scope>
    <scope>IDENTIFICATION BY MASS SPECTROMETRY [LARGE SCALE ANALYSIS]</scope>
    <source>
        <tissue>Cervix carcinoma</tissue>
    </source>
</reference>
<reference key="8">
    <citation type="submission" date="2006-01" db="PDB data bank">
        <title>Solution structure of the SH3 domain of human hypothetical protein FLJ21522.</title>
        <authorList>
            <consortium name="RIKEN structural genomics initiative (RSGI)"/>
        </authorList>
    </citation>
    <scope>STRUCTURE BY NMR OF 453-507</scope>
</reference>
<reference key="9">
    <citation type="journal article" date="2012" name="J. Med. Genet.">
        <title>Exome sequencing identified a missense mutation of EPS8L3 in Marie Unna hereditary hypotrichosis.</title>
        <authorList>
            <person name="Zhang X."/>
            <person name="Guo B.R."/>
            <person name="Cai L.Q."/>
            <person name="Jiang T."/>
            <person name="Sun L.D."/>
            <person name="Cui Y."/>
            <person name="Hu J.C."/>
            <person name="Zhu J."/>
            <person name="Chen G."/>
            <person name="Tang X.F."/>
            <person name="Sun G.Q."/>
            <person name="Tang H.Y."/>
            <person name="Liu Y."/>
            <person name="Li M."/>
            <person name="Li Q.B."/>
            <person name="Cheng H."/>
            <person name="Gao M."/>
            <person name="Li P."/>
            <person name="Yang X."/>
            <person name="Zuo X.B."/>
            <person name="Zheng X.D."/>
            <person name="Wang P.G."/>
            <person name="Wang J."/>
            <person name="Wang J."/>
            <person name="Liu J.J."/>
            <person name="Yang S."/>
            <person name="Li Y.R."/>
            <person name="Zhang X.J."/>
        </authorList>
    </citation>
    <scope>VARIANT HYPT5 THR-8</scope>
    <scope>INVOLVEMENT IN HYPT5</scope>
</reference>
<dbReference type="EMBL" id="AY074930">
    <property type="protein sequence ID" value="AAL76119.1"/>
    <property type="molecule type" value="mRNA"/>
</dbReference>
<dbReference type="EMBL" id="AK025175">
    <property type="protein sequence ID" value="BAB15081.1"/>
    <property type="molecule type" value="mRNA"/>
</dbReference>
<dbReference type="EMBL" id="AK292198">
    <property type="protein sequence ID" value="BAF84887.1"/>
    <property type="molecule type" value="mRNA"/>
</dbReference>
<dbReference type="EMBL" id="AL158847">
    <property type="status" value="NOT_ANNOTATED_CDS"/>
    <property type="molecule type" value="Genomic_DNA"/>
</dbReference>
<dbReference type="EMBL" id="BC012926">
    <property type="protein sequence ID" value="AAH12926.1"/>
    <property type="molecule type" value="mRNA"/>
</dbReference>
<dbReference type="CCDS" id="CCDS813.1">
    <molecule id="Q8TE67-2"/>
</dbReference>
<dbReference type="CCDS" id="CCDS814.1">
    <molecule id="Q8TE67-1"/>
</dbReference>
<dbReference type="CCDS" id="CCDS815.1">
    <molecule id="Q8TE67-3"/>
</dbReference>
<dbReference type="RefSeq" id="NP_001306881.1">
    <property type="nucleotide sequence ID" value="NM_001319952.1"/>
</dbReference>
<dbReference type="RefSeq" id="NP_078802.2">
    <molecule id="Q8TE67-2"/>
    <property type="nucleotide sequence ID" value="NM_024526.3"/>
</dbReference>
<dbReference type="RefSeq" id="NP_573444.2">
    <molecule id="Q8TE67-1"/>
    <property type="nucleotide sequence ID" value="NM_133181.3"/>
</dbReference>
<dbReference type="RefSeq" id="NP_620641.1">
    <molecule id="Q8TE67-3"/>
    <property type="nucleotide sequence ID" value="NM_139053.3"/>
</dbReference>
<dbReference type="PDB" id="1WXT">
    <property type="method" value="NMR"/>
    <property type="chains" value="A=453-507"/>
</dbReference>
<dbReference type="PDBsum" id="1WXT"/>
<dbReference type="SMR" id="Q8TE67"/>
<dbReference type="BioGRID" id="122721">
    <property type="interactions" value="7"/>
</dbReference>
<dbReference type="CORUM" id="Q8TE67"/>
<dbReference type="FunCoup" id="Q8TE67">
    <property type="interactions" value="118"/>
</dbReference>
<dbReference type="IntAct" id="Q8TE67">
    <property type="interactions" value="4"/>
</dbReference>
<dbReference type="MINT" id="Q8TE67"/>
<dbReference type="STRING" id="9606.ENSP00000358820"/>
<dbReference type="GlyGen" id="Q8TE67">
    <property type="glycosylation" value="1 site, 1 O-linked glycan (1 site)"/>
</dbReference>
<dbReference type="iPTMnet" id="Q8TE67"/>
<dbReference type="PhosphoSitePlus" id="Q8TE67"/>
<dbReference type="BioMuta" id="EPS8L3"/>
<dbReference type="DMDM" id="108864727"/>
<dbReference type="jPOST" id="Q8TE67"/>
<dbReference type="MassIVE" id="Q8TE67"/>
<dbReference type="PaxDb" id="9606-ENSP00000358820"/>
<dbReference type="PeptideAtlas" id="Q8TE67"/>
<dbReference type="ProteomicsDB" id="74404">
    <molecule id="Q8TE67-1"/>
</dbReference>
<dbReference type="ProteomicsDB" id="74405">
    <molecule id="Q8TE67-2"/>
</dbReference>
<dbReference type="ProteomicsDB" id="74406">
    <molecule id="Q8TE67-3"/>
</dbReference>
<dbReference type="ABCD" id="Q8TE67">
    <property type="antibodies" value="5 sequenced antibodies"/>
</dbReference>
<dbReference type="Antibodypedia" id="53746">
    <property type="antibodies" value="167 antibodies from 26 providers"/>
</dbReference>
<dbReference type="DNASU" id="79574"/>
<dbReference type="Ensembl" id="ENST00000361852.8">
    <molecule id="Q8TE67-2"/>
    <property type="protein sequence ID" value="ENSP00000354551.4"/>
    <property type="gene ID" value="ENSG00000198758.11"/>
</dbReference>
<dbReference type="Ensembl" id="ENST00000361965.9">
    <molecule id="Q8TE67-1"/>
    <property type="protein sequence ID" value="ENSP00000355255.4"/>
    <property type="gene ID" value="ENSG00000198758.11"/>
</dbReference>
<dbReference type="Ensembl" id="ENST00000369805.7">
    <molecule id="Q8TE67-3"/>
    <property type="protein sequence ID" value="ENSP00000358820.3"/>
    <property type="gene ID" value="ENSG00000198758.11"/>
</dbReference>
<dbReference type="GeneID" id="79574"/>
<dbReference type="KEGG" id="hsa:79574"/>
<dbReference type="MANE-Select" id="ENST00000361965.9">
    <property type="protein sequence ID" value="ENSP00000355255.4"/>
    <property type="RefSeq nucleotide sequence ID" value="NM_133181.4"/>
    <property type="RefSeq protein sequence ID" value="NP_573444.2"/>
</dbReference>
<dbReference type="UCSC" id="uc001dyq.3">
    <molecule id="Q8TE67-1"/>
    <property type="organism name" value="human"/>
</dbReference>
<dbReference type="AGR" id="HGNC:21297"/>
<dbReference type="CTD" id="79574"/>
<dbReference type="DisGeNET" id="79574"/>
<dbReference type="GeneCards" id="EPS8L3"/>
<dbReference type="HGNC" id="HGNC:21297">
    <property type="gene designation" value="EPS8L3"/>
</dbReference>
<dbReference type="HPA" id="ENSG00000198758">
    <property type="expression patterns" value="Group enriched (gallbladder, intestine, stomach)"/>
</dbReference>
<dbReference type="MalaCards" id="EPS8L3"/>
<dbReference type="MIM" id="612841">
    <property type="type" value="phenotype"/>
</dbReference>
<dbReference type="MIM" id="614989">
    <property type="type" value="gene"/>
</dbReference>
<dbReference type="neXtProt" id="NX_Q8TE67"/>
<dbReference type="OpenTargets" id="ENSG00000198758"/>
<dbReference type="Orphanet" id="444">
    <property type="disease" value="Marie Unna hereditary hypotrichosis"/>
</dbReference>
<dbReference type="PharmGKB" id="PA134940846"/>
<dbReference type="VEuPathDB" id="HostDB:ENSG00000198758"/>
<dbReference type="eggNOG" id="KOG3557">
    <property type="taxonomic scope" value="Eukaryota"/>
</dbReference>
<dbReference type="GeneTree" id="ENSGT00940000158169"/>
<dbReference type="HOGENOM" id="CLU_014510_0_1_1"/>
<dbReference type="InParanoid" id="Q8TE67"/>
<dbReference type="OMA" id="WTGNEPP"/>
<dbReference type="OrthoDB" id="4680325at2759"/>
<dbReference type="PAN-GO" id="Q8TE67">
    <property type="GO annotations" value="6 GO annotations based on evolutionary models"/>
</dbReference>
<dbReference type="PhylomeDB" id="Q8TE67"/>
<dbReference type="TreeFam" id="TF313069"/>
<dbReference type="PathwayCommons" id="Q8TE67"/>
<dbReference type="SignaLink" id="Q8TE67"/>
<dbReference type="BioGRID-ORCS" id="79574">
    <property type="hits" value="43 hits in 1141 CRISPR screens"/>
</dbReference>
<dbReference type="EvolutionaryTrace" id="Q8TE67"/>
<dbReference type="GeneWiki" id="EPS8L3"/>
<dbReference type="GenomeRNAi" id="79574"/>
<dbReference type="Pharos" id="Q8TE67">
    <property type="development level" value="Tbio"/>
</dbReference>
<dbReference type="PRO" id="PR:Q8TE67"/>
<dbReference type="Proteomes" id="UP000005640">
    <property type="component" value="Chromosome 1"/>
</dbReference>
<dbReference type="RNAct" id="Q8TE67">
    <property type="molecule type" value="protein"/>
</dbReference>
<dbReference type="Bgee" id="ENSG00000198758">
    <property type="expression patterns" value="Expressed in mucosa of transverse colon and 141 other cell types or tissues"/>
</dbReference>
<dbReference type="ExpressionAtlas" id="Q8TE67">
    <property type="expression patterns" value="baseline and differential"/>
</dbReference>
<dbReference type="GO" id="GO:0005737">
    <property type="term" value="C:cytoplasm"/>
    <property type="evidence" value="ECO:0000314"/>
    <property type="project" value="UniProtKB"/>
</dbReference>
<dbReference type="GO" id="GO:0005886">
    <property type="term" value="C:plasma membrane"/>
    <property type="evidence" value="ECO:0000318"/>
    <property type="project" value="GO_Central"/>
</dbReference>
<dbReference type="GO" id="GO:0032587">
    <property type="term" value="C:ruffle membrane"/>
    <property type="evidence" value="ECO:0000318"/>
    <property type="project" value="GO_Central"/>
</dbReference>
<dbReference type="GO" id="GO:0003779">
    <property type="term" value="F:actin binding"/>
    <property type="evidence" value="ECO:0000318"/>
    <property type="project" value="GO_Central"/>
</dbReference>
<dbReference type="GO" id="GO:0005085">
    <property type="term" value="F:guanyl-nucleotide exchange factor activity"/>
    <property type="evidence" value="ECO:0000314"/>
    <property type="project" value="UniProtKB"/>
</dbReference>
<dbReference type="GO" id="GO:1900029">
    <property type="term" value="P:positive regulation of ruffle assembly"/>
    <property type="evidence" value="ECO:0000318"/>
    <property type="project" value="GO_Central"/>
</dbReference>
<dbReference type="GO" id="GO:0042634">
    <property type="term" value="P:regulation of hair cycle"/>
    <property type="evidence" value="ECO:0000315"/>
    <property type="project" value="UniProtKB"/>
</dbReference>
<dbReference type="GO" id="GO:0035023">
    <property type="term" value="P:regulation of Rho protein signal transduction"/>
    <property type="evidence" value="ECO:0000318"/>
    <property type="project" value="GO_Central"/>
</dbReference>
<dbReference type="GO" id="GO:0007266">
    <property type="term" value="P:Rho protein signal transduction"/>
    <property type="evidence" value="ECO:0000318"/>
    <property type="project" value="GO_Central"/>
</dbReference>
<dbReference type="CDD" id="cd01210">
    <property type="entry name" value="PTB_EPS8"/>
    <property type="match status" value="1"/>
</dbReference>
<dbReference type="CDD" id="cd11764">
    <property type="entry name" value="SH3_Eps8"/>
    <property type="match status" value="1"/>
</dbReference>
<dbReference type="FunFam" id="2.30.30.40:FF:000195">
    <property type="entry name" value="epidermal growth factor receptor kinase substrate 8-like protein 3"/>
    <property type="match status" value="1"/>
</dbReference>
<dbReference type="FunFam" id="1.10.150.50:FF:000081">
    <property type="entry name" value="EPS8 like 3"/>
    <property type="match status" value="1"/>
</dbReference>
<dbReference type="FunFam" id="2.30.29.30:FF:000293">
    <property type="entry name" value="EPS8 like 3"/>
    <property type="match status" value="1"/>
</dbReference>
<dbReference type="Gene3D" id="2.30.29.30">
    <property type="entry name" value="Pleckstrin-homology domain (PH domain)/Phosphotyrosine-binding domain (PTB)"/>
    <property type="match status" value="1"/>
</dbReference>
<dbReference type="Gene3D" id="2.30.30.40">
    <property type="entry name" value="SH3 Domains"/>
    <property type="match status" value="1"/>
</dbReference>
<dbReference type="Gene3D" id="1.10.150.50">
    <property type="entry name" value="Transcription Factor, Ets-1"/>
    <property type="match status" value="1"/>
</dbReference>
<dbReference type="InterPro" id="IPR039801">
    <property type="entry name" value="EPS8-like"/>
</dbReference>
<dbReference type="InterPro" id="IPR055093">
    <property type="entry name" value="EPS8_2nd"/>
</dbReference>
<dbReference type="InterPro" id="IPR033928">
    <property type="entry name" value="EPS8_PTB"/>
</dbReference>
<dbReference type="InterPro" id="IPR035462">
    <property type="entry name" value="Eps8_SH3"/>
</dbReference>
<dbReference type="InterPro" id="IPR011993">
    <property type="entry name" value="PH-like_dom_sf"/>
</dbReference>
<dbReference type="InterPro" id="IPR013625">
    <property type="entry name" value="PTB"/>
</dbReference>
<dbReference type="InterPro" id="IPR013761">
    <property type="entry name" value="SAM/pointed_sf"/>
</dbReference>
<dbReference type="InterPro" id="IPR041418">
    <property type="entry name" value="SAM_3"/>
</dbReference>
<dbReference type="InterPro" id="IPR036028">
    <property type="entry name" value="SH3-like_dom_sf"/>
</dbReference>
<dbReference type="InterPro" id="IPR001452">
    <property type="entry name" value="SH3_domain"/>
</dbReference>
<dbReference type="PANTHER" id="PTHR12287:SF22">
    <property type="entry name" value="EPIDERMAL GROWTH FACTOR RECEPTOR KINASE SUBSTRATE 8-LIKE PROTEIN 3"/>
    <property type="match status" value="1"/>
</dbReference>
<dbReference type="PANTHER" id="PTHR12287">
    <property type="entry name" value="EPIDERMAL GROWTH FACTOR RECEPTOR KINASE SUBSTRATE EPS8-RELATED PROTEIN"/>
    <property type="match status" value="1"/>
</dbReference>
<dbReference type="Pfam" id="PF22975">
    <property type="entry name" value="EPS8_2nd"/>
    <property type="match status" value="1"/>
</dbReference>
<dbReference type="Pfam" id="PF08416">
    <property type="entry name" value="PTB"/>
    <property type="match status" value="1"/>
</dbReference>
<dbReference type="Pfam" id="PF18016">
    <property type="entry name" value="SAM_3"/>
    <property type="match status" value="1"/>
</dbReference>
<dbReference type="Pfam" id="PF00018">
    <property type="entry name" value="SH3_1"/>
    <property type="match status" value="1"/>
</dbReference>
<dbReference type="SMART" id="SM00326">
    <property type="entry name" value="SH3"/>
    <property type="match status" value="1"/>
</dbReference>
<dbReference type="SUPFAM" id="SSF50729">
    <property type="entry name" value="PH domain-like"/>
    <property type="match status" value="1"/>
</dbReference>
<dbReference type="SUPFAM" id="SSF50044">
    <property type="entry name" value="SH3-domain"/>
    <property type="match status" value="1"/>
</dbReference>
<dbReference type="PROSITE" id="PS50002">
    <property type="entry name" value="SH3"/>
    <property type="match status" value="1"/>
</dbReference>
<name>ES8L3_HUMAN</name>
<sequence>MSRPSSRAIYLHRKEYSQNLTSEPTLLQHRVEHLMTCKQGSQRVQGPEDALQKLFEMDAQGRVWSQDLILQVRDGWLQLLDIETKEELDSYRLDSIQAMNVALNTCSYNSILSITVQEPGLPGTSTLLFQCQEVGAERLKTSLQKALEEELEQRPRLGGLQPGQDRWRGPAMERPLPMEQARYLEPGIPPEQPHQRTLEHSLPPSPRPLPRHTSAREPSAFTLPPPRRSSSPEDPERDEEVLNHVLRDIELFMGKLEKAQAKTSRKKKFGKKNKDQGGLTQAQYIDCFQKIKHSFNLLGRLATWLKETSAPELVHILFKSLNFILARCPEAGLAAQVISPLLTPKAINLLQSCLSPPESNLWMGLGPAWTTSRADWTGDEPLPYQPTFSDDWQLPEPSSQAPLGYQDPVSLRRGSHRLGSTSHFPQEKTHNHDPQPGDPNSRPSSPKPAQPALKMQVLYEFEARNPRELTVVQGEKLEVLDHSKRWWLVKNEAGRSGYIPSNILEPLQPGTPGTQGQSPSRVPMLRLSSRPEEVTDWLQAENFSTATVRTLGSLTGSQLLRIRPGELQMLCPQEAPRILSRLEAVRRMLGISP</sequence>